<accession>Q5HF97</accession>
<keyword id="KW-0131">Cell cycle</keyword>
<keyword id="KW-0132">Cell division</keyword>
<keyword id="KW-0143">Chaperone</keyword>
<keyword id="KW-0963">Cytoplasm</keyword>
<keyword id="KW-0413">Isomerase</keyword>
<keyword id="KW-0697">Rotamase</keyword>
<reference key="1">
    <citation type="journal article" date="2005" name="J. Bacteriol.">
        <title>Insights on evolution of virulence and resistance from the complete genome analysis of an early methicillin-resistant Staphylococcus aureus strain and a biofilm-producing methicillin-resistant Staphylococcus epidermidis strain.</title>
        <authorList>
            <person name="Gill S.R."/>
            <person name="Fouts D.E."/>
            <person name="Archer G.L."/>
            <person name="Mongodin E.F."/>
            <person name="DeBoy R.T."/>
            <person name="Ravel J."/>
            <person name="Paulsen I.T."/>
            <person name="Kolonay J.F."/>
            <person name="Brinkac L.M."/>
            <person name="Beanan M.J."/>
            <person name="Dodson R.J."/>
            <person name="Daugherty S.C."/>
            <person name="Madupu R."/>
            <person name="Angiuoli S.V."/>
            <person name="Durkin A.S."/>
            <person name="Haft D.H."/>
            <person name="Vamathevan J.J."/>
            <person name="Khouri H."/>
            <person name="Utterback T.R."/>
            <person name="Lee C."/>
            <person name="Dimitrov G."/>
            <person name="Jiang L."/>
            <person name="Qin H."/>
            <person name="Weidman J."/>
            <person name="Tran K."/>
            <person name="Kang K.H."/>
            <person name="Hance I.R."/>
            <person name="Nelson K.E."/>
            <person name="Fraser C.M."/>
        </authorList>
    </citation>
    <scope>NUCLEOTIDE SEQUENCE [LARGE SCALE GENOMIC DNA]</scope>
    <source>
        <strain>COL</strain>
    </source>
</reference>
<sequence length="433" mass="48609">MTATWEKKEGNEGLLTVTVPAEKVNKALDQAFKKVVKQINVPGFRKGKVPRPIFEQRFGVEALYQDAIDILLPDAYGEAIDETDIKPVAQPEVSVTQIEKGKDFIFEATVTVEPEVKLGDYKGLEIEKQETELSDDELQEAIDHSLGHLAEMVVKEDGVVENGDTVNIDFSGSVDGEEFEGGQAEGYDLEIGSGSFIPGFEEQLEGMKVDEEKDVVVTFPEEYHAEELAGKEATFKTKVNEIKFKEVPELTDEIANELDAEANTVDEYKENLRKRLAEQKATDAENVEKEEAITKATDNTTIDIPEAMVNTELDRMVSEFAQRIQQQGLDLQTYFQISGQDETQLREQMKDDAEQRVKTNLTLTAIAEAEKIEATDEDIDKELEKMSKQFNISVEDIKNTLGNTDIIKNDVRIQKVIDLLRDNAKFVEGTKED</sequence>
<name>TIG_STAAC</name>
<organism>
    <name type="scientific">Staphylococcus aureus (strain COL)</name>
    <dbReference type="NCBI Taxonomy" id="93062"/>
    <lineage>
        <taxon>Bacteria</taxon>
        <taxon>Bacillati</taxon>
        <taxon>Bacillota</taxon>
        <taxon>Bacilli</taxon>
        <taxon>Bacillales</taxon>
        <taxon>Staphylococcaceae</taxon>
        <taxon>Staphylococcus</taxon>
    </lineage>
</organism>
<dbReference type="EC" id="5.2.1.8" evidence="1"/>
<dbReference type="EMBL" id="CP000046">
    <property type="protein sequence ID" value="AAW36827.1"/>
    <property type="molecule type" value="Genomic_DNA"/>
</dbReference>
<dbReference type="RefSeq" id="WP_000127573.1">
    <property type="nucleotide sequence ID" value="NZ_JBGOFO010000003.1"/>
</dbReference>
<dbReference type="SMR" id="Q5HF97"/>
<dbReference type="KEGG" id="sac:SACOL1722"/>
<dbReference type="HOGENOM" id="CLU_033058_3_2_9"/>
<dbReference type="Proteomes" id="UP000000530">
    <property type="component" value="Chromosome"/>
</dbReference>
<dbReference type="GO" id="GO:0005737">
    <property type="term" value="C:cytoplasm"/>
    <property type="evidence" value="ECO:0007669"/>
    <property type="project" value="UniProtKB-SubCell"/>
</dbReference>
<dbReference type="GO" id="GO:0003755">
    <property type="term" value="F:peptidyl-prolyl cis-trans isomerase activity"/>
    <property type="evidence" value="ECO:0007669"/>
    <property type="project" value="UniProtKB-UniRule"/>
</dbReference>
<dbReference type="GO" id="GO:0044183">
    <property type="term" value="F:protein folding chaperone"/>
    <property type="evidence" value="ECO:0007669"/>
    <property type="project" value="TreeGrafter"/>
</dbReference>
<dbReference type="GO" id="GO:0043022">
    <property type="term" value="F:ribosome binding"/>
    <property type="evidence" value="ECO:0007669"/>
    <property type="project" value="TreeGrafter"/>
</dbReference>
<dbReference type="GO" id="GO:0051083">
    <property type="term" value="P:'de novo' cotranslational protein folding"/>
    <property type="evidence" value="ECO:0007669"/>
    <property type="project" value="TreeGrafter"/>
</dbReference>
<dbReference type="GO" id="GO:0051301">
    <property type="term" value="P:cell division"/>
    <property type="evidence" value="ECO:0007669"/>
    <property type="project" value="UniProtKB-KW"/>
</dbReference>
<dbReference type="GO" id="GO:0061077">
    <property type="term" value="P:chaperone-mediated protein folding"/>
    <property type="evidence" value="ECO:0007669"/>
    <property type="project" value="TreeGrafter"/>
</dbReference>
<dbReference type="GO" id="GO:0015031">
    <property type="term" value="P:protein transport"/>
    <property type="evidence" value="ECO:0007669"/>
    <property type="project" value="UniProtKB-UniRule"/>
</dbReference>
<dbReference type="GO" id="GO:0043335">
    <property type="term" value="P:protein unfolding"/>
    <property type="evidence" value="ECO:0007669"/>
    <property type="project" value="TreeGrafter"/>
</dbReference>
<dbReference type="FunFam" id="3.10.50.40:FF:000001">
    <property type="entry name" value="Trigger factor"/>
    <property type="match status" value="1"/>
</dbReference>
<dbReference type="FunFam" id="3.30.70.1050:FF:000002">
    <property type="entry name" value="Trigger factor"/>
    <property type="match status" value="1"/>
</dbReference>
<dbReference type="Gene3D" id="3.10.50.40">
    <property type="match status" value="1"/>
</dbReference>
<dbReference type="Gene3D" id="3.30.70.1050">
    <property type="entry name" value="Trigger factor ribosome-binding domain"/>
    <property type="match status" value="1"/>
</dbReference>
<dbReference type="Gene3D" id="1.10.3120.10">
    <property type="entry name" value="Trigger factor, C-terminal domain"/>
    <property type="match status" value="1"/>
</dbReference>
<dbReference type="HAMAP" id="MF_00303">
    <property type="entry name" value="Trigger_factor_Tig"/>
    <property type="match status" value="1"/>
</dbReference>
<dbReference type="InterPro" id="IPR046357">
    <property type="entry name" value="PPIase_dom_sf"/>
</dbReference>
<dbReference type="InterPro" id="IPR001179">
    <property type="entry name" value="PPIase_FKBP_dom"/>
</dbReference>
<dbReference type="InterPro" id="IPR005215">
    <property type="entry name" value="Trig_fac"/>
</dbReference>
<dbReference type="InterPro" id="IPR008880">
    <property type="entry name" value="Trigger_fac_C"/>
</dbReference>
<dbReference type="InterPro" id="IPR037041">
    <property type="entry name" value="Trigger_fac_C_sf"/>
</dbReference>
<dbReference type="InterPro" id="IPR008881">
    <property type="entry name" value="Trigger_fac_ribosome-bd_bac"/>
</dbReference>
<dbReference type="InterPro" id="IPR036611">
    <property type="entry name" value="Trigger_fac_ribosome-bd_sf"/>
</dbReference>
<dbReference type="InterPro" id="IPR027304">
    <property type="entry name" value="Trigger_fact/SurA_dom_sf"/>
</dbReference>
<dbReference type="NCBIfam" id="TIGR00115">
    <property type="entry name" value="tig"/>
    <property type="match status" value="1"/>
</dbReference>
<dbReference type="PANTHER" id="PTHR30560">
    <property type="entry name" value="TRIGGER FACTOR CHAPERONE AND PEPTIDYL-PROLYL CIS/TRANS ISOMERASE"/>
    <property type="match status" value="1"/>
</dbReference>
<dbReference type="PANTHER" id="PTHR30560:SF3">
    <property type="entry name" value="TRIGGER FACTOR-LIKE PROTEIN TIG, CHLOROPLASTIC"/>
    <property type="match status" value="1"/>
</dbReference>
<dbReference type="Pfam" id="PF00254">
    <property type="entry name" value="FKBP_C"/>
    <property type="match status" value="1"/>
</dbReference>
<dbReference type="Pfam" id="PF05698">
    <property type="entry name" value="Trigger_C"/>
    <property type="match status" value="1"/>
</dbReference>
<dbReference type="Pfam" id="PF05697">
    <property type="entry name" value="Trigger_N"/>
    <property type="match status" value="1"/>
</dbReference>
<dbReference type="PIRSF" id="PIRSF003095">
    <property type="entry name" value="Trigger_factor"/>
    <property type="match status" value="1"/>
</dbReference>
<dbReference type="SUPFAM" id="SSF54534">
    <property type="entry name" value="FKBP-like"/>
    <property type="match status" value="1"/>
</dbReference>
<dbReference type="SUPFAM" id="SSF109998">
    <property type="entry name" value="Triger factor/SurA peptide-binding domain-like"/>
    <property type="match status" value="1"/>
</dbReference>
<dbReference type="SUPFAM" id="SSF102735">
    <property type="entry name" value="Trigger factor ribosome-binding domain"/>
    <property type="match status" value="1"/>
</dbReference>
<dbReference type="PROSITE" id="PS50059">
    <property type="entry name" value="FKBP_PPIASE"/>
    <property type="match status" value="1"/>
</dbReference>
<protein>
    <recommendedName>
        <fullName evidence="1">Trigger factor</fullName>
        <shortName evidence="1">TF</shortName>
        <ecNumber evidence="1">5.2.1.8</ecNumber>
    </recommendedName>
    <alternativeName>
        <fullName evidence="1">PPIase</fullName>
    </alternativeName>
</protein>
<comment type="function">
    <text evidence="1">Involved in protein export. Acts as a chaperone by maintaining the newly synthesized protein in an open conformation. Functions as a peptidyl-prolyl cis-trans isomerase.</text>
</comment>
<comment type="catalytic activity">
    <reaction evidence="1">
        <text>[protein]-peptidylproline (omega=180) = [protein]-peptidylproline (omega=0)</text>
        <dbReference type="Rhea" id="RHEA:16237"/>
        <dbReference type="Rhea" id="RHEA-COMP:10747"/>
        <dbReference type="Rhea" id="RHEA-COMP:10748"/>
        <dbReference type="ChEBI" id="CHEBI:83833"/>
        <dbReference type="ChEBI" id="CHEBI:83834"/>
        <dbReference type="EC" id="5.2.1.8"/>
    </reaction>
</comment>
<comment type="subcellular location">
    <subcellularLocation>
        <location>Cytoplasm</location>
    </subcellularLocation>
    <text evidence="1">About half TF is bound to the ribosome near the polypeptide exit tunnel while the other half is free in the cytoplasm.</text>
</comment>
<comment type="domain">
    <text evidence="1">Consists of 3 domains; the N-terminus binds the ribosome, the middle domain has PPIase activity, while the C-terminus has intrinsic chaperone activity on its own.</text>
</comment>
<comment type="similarity">
    <text evidence="1">Belongs to the FKBP-type PPIase family. Tig subfamily.</text>
</comment>
<proteinExistence type="inferred from homology"/>
<evidence type="ECO:0000255" key="1">
    <source>
        <dbReference type="HAMAP-Rule" id="MF_00303"/>
    </source>
</evidence>
<feature type="chain" id="PRO_0000179425" description="Trigger factor">
    <location>
        <begin position="1"/>
        <end position="433"/>
    </location>
</feature>
<feature type="domain" description="PPIase FKBP-type" evidence="1">
    <location>
        <begin position="163"/>
        <end position="248"/>
    </location>
</feature>
<gene>
    <name evidence="1" type="primary">tig</name>
    <name type="ordered locus">SACOL1722</name>
</gene>